<evidence type="ECO:0000255" key="1">
    <source>
        <dbReference type="HAMAP-Rule" id="MF_01535"/>
    </source>
</evidence>
<evidence type="ECO:0000305" key="2"/>
<feature type="chain" id="PRO_0000292780" description="Rhamnulokinase">
    <location>
        <begin position="1"/>
        <end position="485"/>
    </location>
</feature>
<feature type="active site" description="Proton acceptor" evidence="1">
    <location>
        <position position="232"/>
    </location>
</feature>
<feature type="binding site" evidence="1">
    <location>
        <begin position="8"/>
        <end position="12"/>
    </location>
    <ligand>
        <name>ATP</name>
        <dbReference type="ChEBI" id="CHEBI:30616"/>
    </ligand>
</feature>
<feature type="binding site" evidence="1">
    <location>
        <position position="78"/>
    </location>
    <ligand>
        <name>substrate</name>
    </ligand>
</feature>
<feature type="binding site" evidence="1">
    <location>
        <begin position="231"/>
        <end position="233"/>
    </location>
    <ligand>
        <name>substrate</name>
    </ligand>
</feature>
<feature type="binding site" evidence="1">
    <location>
        <position position="254"/>
    </location>
    <ligand>
        <name>ATP</name>
        <dbReference type="ChEBI" id="CHEBI:30616"/>
    </ligand>
</feature>
<feature type="binding site" evidence="1">
    <location>
        <position position="291"/>
    </location>
    <ligand>
        <name>substrate</name>
    </ligand>
</feature>
<feature type="binding site" evidence="1">
    <location>
        <position position="299"/>
    </location>
    <ligand>
        <name>ATP</name>
        <dbReference type="ChEBI" id="CHEBI:30616"/>
    </ligand>
</feature>
<feature type="binding site" evidence="1">
    <location>
        <position position="397"/>
    </location>
    <ligand>
        <name>ATP</name>
        <dbReference type="ChEBI" id="CHEBI:30616"/>
    </ligand>
</feature>
<feature type="disulfide bond" evidence="1">
    <location>
        <begin position="348"/>
        <end position="365"/>
    </location>
</feature>
<feature type="disulfide bond" evidence="1">
    <location>
        <begin position="408"/>
        <end position="412"/>
    </location>
</feature>
<protein>
    <recommendedName>
        <fullName evidence="1">Rhamnulokinase</fullName>
        <shortName evidence="1">RhaB</shortName>
        <ecNumber evidence="1">2.7.1.5</ecNumber>
    </recommendedName>
    <alternativeName>
        <fullName evidence="1">ATP:L-rhamnulose phosphotransferase</fullName>
    </alternativeName>
    <alternativeName>
        <fullName evidence="1">L-rhamnulose 1-kinase</fullName>
    </alternativeName>
    <alternativeName>
        <fullName evidence="1">Rhamnulose kinase</fullName>
    </alternativeName>
</protein>
<comment type="function">
    <text evidence="1">Involved in the catabolism of L-rhamnose (6-deoxy-L-mannose). Catalyzes the transfer of the gamma-phosphate group from ATP to the 1-hydroxyl group of L-rhamnulose to yield L-rhamnulose 1-phosphate.</text>
</comment>
<comment type="catalytic activity">
    <reaction evidence="1">
        <text>L-rhamnulose + ATP = L-rhamnulose 1-phosphate + ADP + H(+)</text>
        <dbReference type="Rhea" id="RHEA:20117"/>
        <dbReference type="ChEBI" id="CHEBI:15378"/>
        <dbReference type="ChEBI" id="CHEBI:17897"/>
        <dbReference type="ChEBI" id="CHEBI:30616"/>
        <dbReference type="ChEBI" id="CHEBI:58313"/>
        <dbReference type="ChEBI" id="CHEBI:456216"/>
        <dbReference type="EC" id="2.7.1.5"/>
    </reaction>
</comment>
<comment type="cofactor">
    <cofactor evidence="1">
        <name>Mg(2+)</name>
        <dbReference type="ChEBI" id="CHEBI:18420"/>
    </cofactor>
</comment>
<comment type="pathway">
    <text evidence="1">Carbohydrate degradation; L-rhamnose degradation; glycerone phosphate from L-rhamnose: step 2/3.</text>
</comment>
<comment type="similarity">
    <text evidence="1">Belongs to the rhamnulokinase family.</text>
</comment>
<comment type="sequence caution" evidence="2">
    <conflict type="erroneous initiation">
        <sequence resource="EMBL-CDS" id="ABG19667"/>
    </conflict>
    <text>Extended N-terminus.</text>
</comment>
<proteinExistence type="inferred from homology"/>
<reference key="1">
    <citation type="journal article" date="2006" name="J. Bacteriol.">
        <title>Complete genome sequence of Yersinia pestis strains Antiqua and Nepal516: evidence of gene reduction in an emerging pathogen.</title>
        <authorList>
            <person name="Chain P.S.G."/>
            <person name="Hu P."/>
            <person name="Malfatti S.A."/>
            <person name="Radnedge L."/>
            <person name="Larimer F."/>
            <person name="Vergez L.M."/>
            <person name="Worsham P."/>
            <person name="Chu M.C."/>
            <person name="Andersen G.L."/>
        </authorList>
    </citation>
    <scope>NUCLEOTIDE SEQUENCE [LARGE SCALE GENOMIC DNA]</scope>
    <source>
        <strain>Nepal516</strain>
    </source>
</reference>
<reference key="2">
    <citation type="submission" date="2009-04" db="EMBL/GenBank/DDBJ databases">
        <title>Yersinia pestis Nepal516A whole genome shotgun sequencing project.</title>
        <authorList>
            <person name="Plunkett G. III"/>
            <person name="Anderson B.D."/>
            <person name="Baumler D.J."/>
            <person name="Burland V."/>
            <person name="Cabot E.L."/>
            <person name="Glasner J.D."/>
            <person name="Mau B."/>
            <person name="Neeno-Eckwall E."/>
            <person name="Perna N.T."/>
            <person name="Munk A.C."/>
            <person name="Tapia R."/>
            <person name="Green L.D."/>
            <person name="Rogers Y.C."/>
            <person name="Detter J.C."/>
            <person name="Bruce D.C."/>
            <person name="Brettin T.S."/>
        </authorList>
    </citation>
    <scope>NUCLEOTIDE SEQUENCE [LARGE SCALE GENOMIC DNA]</scope>
    <source>
        <strain>Nepal516</strain>
    </source>
</reference>
<accession>Q1CEB3</accession>
<accession>C4GY58</accession>
<keyword id="KW-0067">ATP-binding</keyword>
<keyword id="KW-1015">Disulfide bond</keyword>
<keyword id="KW-0418">Kinase</keyword>
<keyword id="KW-0460">Magnesium</keyword>
<keyword id="KW-0547">Nucleotide-binding</keyword>
<keyword id="KW-0684">Rhamnose metabolism</keyword>
<keyword id="KW-0808">Transferase</keyword>
<name>RHAB_YERPN</name>
<dbReference type="EC" id="2.7.1.5" evidence="1"/>
<dbReference type="EMBL" id="CP000305">
    <property type="protein sequence ID" value="ABG19667.1"/>
    <property type="status" value="ALT_INIT"/>
    <property type="molecule type" value="Genomic_DNA"/>
</dbReference>
<dbReference type="EMBL" id="ACNQ01000017">
    <property type="protein sequence ID" value="EEO75858.1"/>
    <property type="molecule type" value="Genomic_DNA"/>
</dbReference>
<dbReference type="RefSeq" id="WP_002209105.1">
    <property type="nucleotide sequence ID" value="NZ_ACNQ01000017.1"/>
</dbReference>
<dbReference type="SMR" id="Q1CEB3"/>
<dbReference type="GeneID" id="57974275"/>
<dbReference type="KEGG" id="ypn:YPN_3340"/>
<dbReference type="HOGENOM" id="CLU_039395_0_1_6"/>
<dbReference type="UniPathway" id="UPA00541">
    <property type="reaction ID" value="UER00602"/>
</dbReference>
<dbReference type="Proteomes" id="UP000008936">
    <property type="component" value="Chromosome"/>
</dbReference>
<dbReference type="GO" id="GO:0005829">
    <property type="term" value="C:cytosol"/>
    <property type="evidence" value="ECO:0007669"/>
    <property type="project" value="TreeGrafter"/>
</dbReference>
<dbReference type="GO" id="GO:0005524">
    <property type="term" value="F:ATP binding"/>
    <property type="evidence" value="ECO:0007669"/>
    <property type="project" value="UniProtKB-KW"/>
</dbReference>
<dbReference type="GO" id="GO:0004370">
    <property type="term" value="F:glycerol kinase activity"/>
    <property type="evidence" value="ECO:0007669"/>
    <property type="project" value="TreeGrafter"/>
</dbReference>
<dbReference type="GO" id="GO:0008993">
    <property type="term" value="F:rhamnulokinase activity"/>
    <property type="evidence" value="ECO:0007669"/>
    <property type="project" value="UniProtKB-UniRule"/>
</dbReference>
<dbReference type="GO" id="GO:0006071">
    <property type="term" value="P:glycerol metabolic process"/>
    <property type="evidence" value="ECO:0007669"/>
    <property type="project" value="TreeGrafter"/>
</dbReference>
<dbReference type="GO" id="GO:0019301">
    <property type="term" value="P:rhamnose catabolic process"/>
    <property type="evidence" value="ECO:0007669"/>
    <property type="project" value="UniProtKB-UniRule"/>
</dbReference>
<dbReference type="CDD" id="cd07771">
    <property type="entry name" value="ASKHA_NBD_FGGY_RhaB-like"/>
    <property type="match status" value="1"/>
</dbReference>
<dbReference type="FunFam" id="3.30.420.40:FF:000064">
    <property type="entry name" value="Rhamnulokinase"/>
    <property type="match status" value="1"/>
</dbReference>
<dbReference type="FunFam" id="3.30.420.40:FF:000073">
    <property type="entry name" value="Rhamnulokinase"/>
    <property type="match status" value="1"/>
</dbReference>
<dbReference type="Gene3D" id="3.30.420.40">
    <property type="match status" value="2"/>
</dbReference>
<dbReference type="HAMAP" id="MF_01535">
    <property type="entry name" value="Rhamnulokinase"/>
    <property type="match status" value="1"/>
</dbReference>
<dbReference type="InterPro" id="IPR043129">
    <property type="entry name" value="ATPase_NBD"/>
</dbReference>
<dbReference type="InterPro" id="IPR000577">
    <property type="entry name" value="Carb_kinase_FGGY"/>
</dbReference>
<dbReference type="InterPro" id="IPR018485">
    <property type="entry name" value="FGGY_C"/>
</dbReference>
<dbReference type="InterPro" id="IPR018484">
    <property type="entry name" value="FGGY_N"/>
</dbReference>
<dbReference type="InterPro" id="IPR013449">
    <property type="entry name" value="Rhamnulokinase"/>
</dbReference>
<dbReference type="NCBIfam" id="NF007925">
    <property type="entry name" value="PRK10640.1"/>
    <property type="match status" value="1"/>
</dbReference>
<dbReference type="NCBIfam" id="TIGR02627">
    <property type="entry name" value="rhamnulo_kin"/>
    <property type="match status" value="1"/>
</dbReference>
<dbReference type="PANTHER" id="PTHR10196:SF93">
    <property type="entry name" value="L-RHAMNULOKINASE"/>
    <property type="match status" value="1"/>
</dbReference>
<dbReference type="PANTHER" id="PTHR10196">
    <property type="entry name" value="SUGAR KINASE"/>
    <property type="match status" value="1"/>
</dbReference>
<dbReference type="Pfam" id="PF02782">
    <property type="entry name" value="FGGY_C"/>
    <property type="match status" value="1"/>
</dbReference>
<dbReference type="Pfam" id="PF00370">
    <property type="entry name" value="FGGY_N"/>
    <property type="match status" value="1"/>
</dbReference>
<dbReference type="PIRSF" id="PIRSF000538">
    <property type="entry name" value="GlpK"/>
    <property type="match status" value="1"/>
</dbReference>
<dbReference type="SUPFAM" id="SSF53067">
    <property type="entry name" value="Actin-like ATPase domain"/>
    <property type="match status" value="2"/>
</dbReference>
<organism>
    <name type="scientific">Yersinia pestis bv. Antiqua (strain Nepal516)</name>
    <dbReference type="NCBI Taxonomy" id="377628"/>
    <lineage>
        <taxon>Bacteria</taxon>
        <taxon>Pseudomonadati</taxon>
        <taxon>Pseudomonadota</taxon>
        <taxon>Gammaproteobacteria</taxon>
        <taxon>Enterobacterales</taxon>
        <taxon>Yersiniaceae</taxon>
        <taxon>Yersinia</taxon>
    </lineage>
</organism>
<gene>
    <name evidence="1" type="primary">rhaB</name>
    <name type="ordered locus">YPN_3340</name>
    <name type="ORF">YP516_3797</name>
</gene>
<sequence length="485" mass="53424">MVAIDLGASSGRVMLASYYPGQQQLTLREVCRFTNQIKSIDGSDVWDIDAIEQSIREGLSQLDSEGIALDSIGIDSWGVDFVLLDKQGKRIGQPVSYRDSRTQGVMARAQQTLGSNAIYRRTGIQFLPFNTLYQLRALSEQQPHLLADVAHLLLIPDYLHYRLTGQLNWEYTNASTTQLLNIETGDWDSDLLAYAGVPAHWFAKPGKPGNTIGYWHSANGQQVPVVAVATHDTASAVLAAPLIDADAAYLSSGTWSLMGFESGTPLTHQQAQCSNITNEGGAEGRYRVLKNIMGLWLLQRATDELQIDDLPQLIEQAARQPACRSLINPNDSRFINPPNMCREIQNACREHQFPVPNTAAQLARCIFDSLAMLYRQVAQELATLRGRPISHLHIVGGGCQNQFLNQLCADACGLNVSMGPVEASTLGNIGSQLISLGEVADVTHYRRIVANNFPLHHLSPHDNSDFAAHWLQFQSLSQLPKELCI</sequence>